<evidence type="ECO:0000256" key="1">
    <source>
        <dbReference type="SAM" id="MobiDB-lite"/>
    </source>
</evidence>
<evidence type="ECO:0000269" key="2">
    <source>
    </source>
</evidence>
<evidence type="ECO:0000269" key="3">
    <source>
    </source>
</evidence>
<evidence type="ECO:0000269" key="4">
    <source>
    </source>
</evidence>
<evidence type="ECO:0000269" key="5">
    <source>
    </source>
</evidence>
<evidence type="ECO:0000305" key="6"/>
<comment type="function">
    <text evidence="3 4 5">Acts as a component of the THO subcomplex of the TREX complex which is thought to couple mRNA transcription, processing and nuclear export. Contributes to the integrity of the endogenous trans-acting small interfering RNA (ta-siRNA) pathway. May process or transport a long RNA molecule so that it can be a template for secondary siRNA production. May participate in the trafficking of siRNA precursors to the ARGONAUTE catalytic center. Required for the generation of functional messenger ribonucleoproteins (mRNPs). Plays an important roles in plant innate immunity.</text>
</comment>
<comment type="subunit">
    <text evidence="2">Component of the THO complex, which is composed of THO1, THO2, THO3, THO5, THO6 and THO7.</text>
</comment>
<comment type="subcellular location">
    <subcellularLocation>
        <location evidence="5">Nucleus</location>
    </subcellularLocation>
</comment>
<comment type="alternative products">
    <event type="alternative splicing"/>
    <isoform>
        <id>Q93VM9-1</id>
        <name>1</name>
        <sequence type="displayed"/>
    </isoform>
    <text>A number of isoforms are produced. According to EST sequences.</text>
</comment>
<comment type="disruption phenotype">
    <text evidence="3 4">Developmental defects as well as reduced levels of endogenous trans-acting small interfering RNA (ta-siRNA).</text>
</comment>
<comment type="sequence caution" evidence="6">
    <conflict type="erroneous gene model prediction">
        <sequence resource="EMBL-CDS" id="BAB09407"/>
    </conflict>
</comment>
<keyword id="KW-0025">Alternative splicing</keyword>
<keyword id="KW-0507">mRNA processing</keyword>
<keyword id="KW-0508">mRNA splicing</keyword>
<keyword id="KW-0509">mRNA transport</keyword>
<keyword id="KW-0539">Nucleus</keyword>
<keyword id="KW-0611">Plant defense</keyword>
<keyword id="KW-1185">Reference proteome</keyword>
<keyword id="KW-0694">RNA-binding</keyword>
<keyword id="KW-0943">RNA-mediated gene silencing</keyword>
<keyword id="KW-0813">Transport</keyword>
<name>THOC1_ARATH</name>
<sequence>MDAFRDAILQRAPIETFALKTVQHFIQPQKQTKLAQDENQMLENMLRTLLQELVAAAAQSGEQIMQYGQLIDDDDDDDDIHGQIPHLLDVVLYLCEKEHVEGGMIFQLLEDLTEMSTMKNCKDVFGYIESKQDILGKQELFARGKLVMLRTCNQLLRRLSKANDVVFCGRILMFLAHFFPLSERSAVNIKGVFNTSNETKYEKDPPKGISVDFNFYKTFWSLQEYFCNPASLTSASTKWQKFSSSLAVVLNTFDAQPLSEEEGEANSLEEEAATFNIKYLTSSKLMGLELKDSSFRRHILLQCLIMFDYLRAPGKNDKDLPSETMKEELKSCEDRVKKLLEITPPKGKEFLRAVEHILEREKNWVWWKRDGCPPFEKQPIDKKSPNAGQKKRRQRWRLGNKELSQLWRWADQNPNALTDSQRVRTPDIADYWKPLAEDMDPSAGIEDEYHHKNNRVYCWKGLRFTARQDLEGFSRFTEMGIEGVVPVELLPPEVRSKYQAKPNEKAKRAKKEETKGGSHETEGNQIGVSNSEAEAEGGRGDAETMESDAIADTPTPEEQQRLGGSDTENGQEAGQIEDGETEEAGLMDTDLDHPPMPVS</sequence>
<organism>
    <name type="scientific">Arabidopsis thaliana</name>
    <name type="common">Mouse-ear cress</name>
    <dbReference type="NCBI Taxonomy" id="3702"/>
    <lineage>
        <taxon>Eukaryota</taxon>
        <taxon>Viridiplantae</taxon>
        <taxon>Streptophyta</taxon>
        <taxon>Embryophyta</taxon>
        <taxon>Tracheophyta</taxon>
        <taxon>Spermatophyta</taxon>
        <taxon>Magnoliopsida</taxon>
        <taxon>eudicotyledons</taxon>
        <taxon>Gunneridae</taxon>
        <taxon>Pentapetalae</taxon>
        <taxon>rosids</taxon>
        <taxon>malvids</taxon>
        <taxon>Brassicales</taxon>
        <taxon>Brassicaceae</taxon>
        <taxon>Camelineae</taxon>
        <taxon>Arabidopsis</taxon>
    </lineage>
</organism>
<protein>
    <recommendedName>
        <fullName>THO complex subunit 1</fullName>
        <shortName>AtTHO1</shortName>
    </recommendedName>
    <alternativeName>
        <fullName>HPR1 homolog</fullName>
        <shortName>AtHPR1</shortName>
    </alternativeName>
</protein>
<feature type="chain" id="PRO_0000425582" description="THO complex subunit 1">
    <location>
        <begin position="1"/>
        <end position="599"/>
    </location>
</feature>
<feature type="region of interest" description="Disordered" evidence="1">
    <location>
        <begin position="376"/>
        <end position="395"/>
    </location>
</feature>
<feature type="region of interest" description="Disordered" evidence="1">
    <location>
        <begin position="497"/>
        <end position="599"/>
    </location>
</feature>
<feature type="compositionally biased region" description="Basic and acidic residues" evidence="1">
    <location>
        <begin position="502"/>
        <end position="522"/>
    </location>
</feature>
<feature type="compositionally biased region" description="Acidic residues" evidence="1">
    <location>
        <begin position="575"/>
        <end position="585"/>
    </location>
</feature>
<feature type="sequence conflict" description="In Ref. 3; AAN33204." evidence="6" ref="3">
    <original>C</original>
    <variation>Y</variation>
    <location>
        <position position="372"/>
    </location>
</feature>
<gene>
    <name type="primary">THO1</name>
    <name type="synonym">EMU</name>
    <name type="synonym">HPR1</name>
    <name type="ordered locus">At5g09860</name>
    <name type="ORF">MYH9.7</name>
</gene>
<proteinExistence type="evidence at protein level"/>
<dbReference type="EMBL" id="AB016893">
    <property type="protein sequence ID" value="BAB09407.1"/>
    <property type="status" value="ALT_SEQ"/>
    <property type="molecule type" value="Genomic_DNA"/>
</dbReference>
<dbReference type="EMBL" id="CP002688">
    <property type="protein sequence ID" value="AED91456.1"/>
    <property type="molecule type" value="Genomic_DNA"/>
</dbReference>
<dbReference type="EMBL" id="AF424566">
    <property type="protein sequence ID" value="AAL11560.1"/>
    <property type="molecule type" value="mRNA"/>
</dbReference>
<dbReference type="EMBL" id="AF428323">
    <property type="protein sequence ID" value="AAL16253.1"/>
    <property type="molecule type" value="mRNA"/>
</dbReference>
<dbReference type="EMBL" id="BT000829">
    <property type="protein sequence ID" value="AAN33204.1"/>
    <property type="molecule type" value="mRNA"/>
</dbReference>
<dbReference type="RefSeq" id="NP_568219.1">
    <molecule id="Q93VM9-1"/>
    <property type="nucleotide sequence ID" value="NM_121023.4"/>
</dbReference>
<dbReference type="SMR" id="Q93VM9"/>
<dbReference type="BioGRID" id="16124">
    <property type="interactions" value="100"/>
</dbReference>
<dbReference type="FunCoup" id="Q93VM9">
    <property type="interactions" value="3875"/>
</dbReference>
<dbReference type="STRING" id="3702.Q93VM9"/>
<dbReference type="GlyGen" id="Q93VM9">
    <property type="glycosylation" value="1 site"/>
</dbReference>
<dbReference type="iPTMnet" id="Q93VM9"/>
<dbReference type="PaxDb" id="3702-AT5G09860.1"/>
<dbReference type="ProteomicsDB" id="234351">
    <molecule id="Q93VM9-1"/>
</dbReference>
<dbReference type="EnsemblPlants" id="AT5G09860.1">
    <molecule id="Q93VM9-1"/>
    <property type="protein sequence ID" value="AT5G09860.1"/>
    <property type="gene ID" value="AT5G09860"/>
</dbReference>
<dbReference type="GeneID" id="830846"/>
<dbReference type="Gramene" id="AT5G09860.1">
    <molecule id="Q93VM9-1"/>
    <property type="protein sequence ID" value="AT5G09860.1"/>
    <property type="gene ID" value="AT5G09860"/>
</dbReference>
<dbReference type="KEGG" id="ath:AT5G09860"/>
<dbReference type="Araport" id="AT5G09860"/>
<dbReference type="TAIR" id="AT5G09860">
    <property type="gene designation" value="THO1"/>
</dbReference>
<dbReference type="eggNOG" id="KOG2491">
    <property type="taxonomic scope" value="Eukaryota"/>
</dbReference>
<dbReference type="HOGENOM" id="CLU_027906_1_1_1"/>
<dbReference type="InParanoid" id="Q93VM9"/>
<dbReference type="OMA" id="TTQGHIP"/>
<dbReference type="PhylomeDB" id="Q93VM9"/>
<dbReference type="PRO" id="PR:Q93VM9"/>
<dbReference type="Proteomes" id="UP000006548">
    <property type="component" value="Chromosome 5"/>
</dbReference>
<dbReference type="ExpressionAtlas" id="Q93VM9">
    <property type="expression patterns" value="baseline and differential"/>
</dbReference>
<dbReference type="GO" id="GO:0005634">
    <property type="term" value="C:nucleus"/>
    <property type="evidence" value="ECO:0000314"/>
    <property type="project" value="TAIR"/>
</dbReference>
<dbReference type="GO" id="GO:0000347">
    <property type="term" value="C:THO complex"/>
    <property type="evidence" value="ECO:0000314"/>
    <property type="project" value="UniProtKB"/>
</dbReference>
<dbReference type="GO" id="GO:0003723">
    <property type="term" value="F:RNA binding"/>
    <property type="evidence" value="ECO:0007669"/>
    <property type="project" value="UniProtKB-KW"/>
</dbReference>
<dbReference type="GO" id="GO:0050832">
    <property type="term" value="P:defense response to fungus"/>
    <property type="evidence" value="ECO:0000315"/>
    <property type="project" value="TAIR"/>
</dbReference>
<dbReference type="GO" id="GO:0009873">
    <property type="term" value="P:ethylene-activated signaling pathway"/>
    <property type="evidence" value="ECO:0000316"/>
    <property type="project" value="TAIR"/>
</dbReference>
<dbReference type="GO" id="GO:0006406">
    <property type="term" value="P:mRNA export from nucleus"/>
    <property type="evidence" value="ECO:0000315"/>
    <property type="project" value="TAIR"/>
</dbReference>
<dbReference type="GO" id="GO:0006397">
    <property type="term" value="P:mRNA processing"/>
    <property type="evidence" value="ECO:0007669"/>
    <property type="project" value="UniProtKB-KW"/>
</dbReference>
<dbReference type="GO" id="GO:0031047">
    <property type="term" value="P:regulatory ncRNA-mediated gene silencing"/>
    <property type="evidence" value="ECO:0000315"/>
    <property type="project" value="TAIR"/>
</dbReference>
<dbReference type="GO" id="GO:0008380">
    <property type="term" value="P:RNA splicing"/>
    <property type="evidence" value="ECO:0007669"/>
    <property type="project" value="UniProtKB-KW"/>
</dbReference>
<dbReference type="GO" id="GO:0010267">
    <property type="term" value="P:ta-siRNA processing"/>
    <property type="evidence" value="ECO:0000315"/>
    <property type="project" value="TAIR"/>
</dbReference>
<dbReference type="InterPro" id="IPR021861">
    <property type="entry name" value="THO_THOC1"/>
</dbReference>
<dbReference type="PANTHER" id="PTHR13265:SF0">
    <property type="entry name" value="HPR1"/>
    <property type="match status" value="1"/>
</dbReference>
<dbReference type="PANTHER" id="PTHR13265">
    <property type="entry name" value="THO COMPLEX SUBUNIT 1"/>
    <property type="match status" value="1"/>
</dbReference>
<dbReference type="Pfam" id="PF11957">
    <property type="entry name" value="efThoc1"/>
    <property type="match status" value="1"/>
</dbReference>
<accession>Q93VM9</accession>
<accession>Q8H134</accession>
<accession>Q9FIC0</accession>
<reference key="1">
    <citation type="journal article" date="1998" name="DNA Res.">
        <title>Structural analysis of Arabidopsis thaliana chromosome 5. VIII. Sequence features of the regions of 1,081,958 bp covered by seventeen physically assigned P1 and TAC clones.</title>
        <authorList>
            <person name="Asamizu E."/>
            <person name="Sato S."/>
            <person name="Kaneko T."/>
            <person name="Nakamura Y."/>
            <person name="Kotani H."/>
            <person name="Miyajima N."/>
            <person name="Tabata S."/>
        </authorList>
    </citation>
    <scope>NUCLEOTIDE SEQUENCE [LARGE SCALE GENOMIC DNA]</scope>
    <source>
        <strain>cv. Columbia</strain>
    </source>
</reference>
<reference key="2">
    <citation type="journal article" date="2017" name="Plant J.">
        <title>Araport11: a complete reannotation of the Arabidopsis thaliana reference genome.</title>
        <authorList>
            <person name="Cheng C.Y."/>
            <person name="Krishnakumar V."/>
            <person name="Chan A.P."/>
            <person name="Thibaud-Nissen F."/>
            <person name="Schobel S."/>
            <person name="Town C.D."/>
        </authorList>
    </citation>
    <scope>GENOME REANNOTATION</scope>
    <source>
        <strain>cv. Columbia</strain>
    </source>
</reference>
<reference key="3">
    <citation type="journal article" date="2003" name="Science">
        <title>Empirical analysis of transcriptional activity in the Arabidopsis genome.</title>
        <authorList>
            <person name="Yamada K."/>
            <person name="Lim J."/>
            <person name="Dale J.M."/>
            <person name="Chen H."/>
            <person name="Shinn P."/>
            <person name="Palm C.J."/>
            <person name="Southwick A.M."/>
            <person name="Wu H.C."/>
            <person name="Kim C.J."/>
            <person name="Nguyen M."/>
            <person name="Pham P.K."/>
            <person name="Cheuk R.F."/>
            <person name="Karlin-Newmann G."/>
            <person name="Liu S.X."/>
            <person name="Lam B."/>
            <person name="Sakano H."/>
            <person name="Wu T."/>
            <person name="Yu G."/>
            <person name="Miranda M."/>
            <person name="Quach H.L."/>
            <person name="Tripp M."/>
            <person name="Chang C.H."/>
            <person name="Lee J.M."/>
            <person name="Toriumi M.J."/>
            <person name="Chan M.M."/>
            <person name="Tang C.C."/>
            <person name="Onodera C.S."/>
            <person name="Deng J.M."/>
            <person name="Akiyama K."/>
            <person name="Ansari Y."/>
            <person name="Arakawa T."/>
            <person name="Banh J."/>
            <person name="Banno F."/>
            <person name="Bowser L."/>
            <person name="Brooks S.Y."/>
            <person name="Carninci P."/>
            <person name="Chao Q."/>
            <person name="Choy N."/>
            <person name="Enju A."/>
            <person name="Goldsmith A.D."/>
            <person name="Gurjal M."/>
            <person name="Hansen N.F."/>
            <person name="Hayashizaki Y."/>
            <person name="Johnson-Hopson C."/>
            <person name="Hsuan V.W."/>
            <person name="Iida K."/>
            <person name="Karnes M."/>
            <person name="Khan S."/>
            <person name="Koesema E."/>
            <person name="Ishida J."/>
            <person name="Jiang P.X."/>
            <person name="Jones T."/>
            <person name="Kawai J."/>
            <person name="Kamiya A."/>
            <person name="Meyers C."/>
            <person name="Nakajima M."/>
            <person name="Narusaka M."/>
            <person name="Seki M."/>
            <person name="Sakurai T."/>
            <person name="Satou M."/>
            <person name="Tamse R."/>
            <person name="Vaysberg M."/>
            <person name="Wallender E.K."/>
            <person name="Wong C."/>
            <person name="Yamamura Y."/>
            <person name="Yuan S."/>
            <person name="Shinozaki K."/>
            <person name="Davis R.W."/>
            <person name="Theologis A."/>
            <person name="Ecker J.R."/>
        </authorList>
    </citation>
    <scope>NUCLEOTIDE SEQUENCE [LARGE SCALE MRNA]</scope>
    <source>
        <strain>cv. Columbia</strain>
    </source>
</reference>
<reference key="4">
    <citation type="journal article" date="2010" name="Plant Cell">
        <title>The conserved RNA trafficking proteins HPR1 and TEX1 are involved in the production of endogenous and exogenous small interfering RNA in Arabidopsis.</title>
        <authorList>
            <person name="Jauvion V."/>
            <person name="Elmayan T."/>
            <person name="Vaucheret H."/>
        </authorList>
    </citation>
    <scope>FUNCTION</scope>
    <scope>DISRUPTION PHENOTYPE</scope>
</reference>
<reference key="5">
    <citation type="journal article" date="2010" name="Proc. Natl. Acad. Sci. U.S.A.">
        <title>Putative Arabidopsis THO/TREX mRNA export complex is involved in transgene and endogenous siRNA biosynthesis.</title>
        <authorList>
            <person name="Yelina N.E."/>
            <person name="Smith L.M."/>
            <person name="Jones A.M."/>
            <person name="Patel K."/>
            <person name="Kelly K.A."/>
            <person name="Baulcombe D.C."/>
        </authorList>
    </citation>
    <scope>IDENTIFICATION BY MASS SPECTROMETRY</scope>
    <scope>SUBUNIT</scope>
</reference>
<reference key="6">
    <citation type="journal article" date="2010" name="RNA">
        <title>Characterization of EMU, the Arabidopsis homolog of the yeast THO complex member HPR1.</title>
        <authorList>
            <person name="Furumizu C."/>
            <person name="Tsukaya H."/>
            <person name="Komeda Y."/>
        </authorList>
    </citation>
    <scope>FUNCTION</scope>
    <scope>DISRUPTION PHENOTYPE</scope>
</reference>
<reference key="7">
    <citation type="journal article" date="2012" name="Plant J.">
        <title>HPR1, a component of the THO/TREX complex, plays an important role in disease resistance and senescence in Arabidopsis.</title>
        <authorList>
            <person name="Pan H."/>
            <person name="Liu S."/>
            <person name="Tang D."/>
        </authorList>
    </citation>
    <scope>FUNCTION</scope>
    <scope>SUBCELLULAR LOCATION</scope>
</reference>